<feature type="chain" id="PRO_1000198755" description="Tryptophan synthase beta chain">
    <location>
        <begin position="1"/>
        <end position="407"/>
    </location>
</feature>
<feature type="modified residue" description="N6-(pyridoxal phosphate)lysine" evidence="1">
    <location>
        <position position="91"/>
    </location>
</feature>
<proteinExistence type="inferred from homology"/>
<evidence type="ECO:0000255" key="1">
    <source>
        <dbReference type="HAMAP-Rule" id="MF_00133"/>
    </source>
</evidence>
<gene>
    <name evidence="1" type="primary">trpB</name>
    <name type="ordered locus">SPN23F18320</name>
</gene>
<accession>B8ZN59</accession>
<dbReference type="EC" id="4.2.1.20" evidence="1"/>
<dbReference type="EMBL" id="FM211187">
    <property type="protein sequence ID" value="CAR69596.1"/>
    <property type="molecule type" value="Genomic_DNA"/>
</dbReference>
<dbReference type="RefSeq" id="WP_000331298.1">
    <property type="nucleotide sequence ID" value="NC_011900.1"/>
</dbReference>
<dbReference type="SMR" id="B8ZN59"/>
<dbReference type="KEGG" id="sne:SPN23F18320"/>
<dbReference type="HOGENOM" id="CLU_016734_3_1_9"/>
<dbReference type="UniPathway" id="UPA00035">
    <property type="reaction ID" value="UER00044"/>
</dbReference>
<dbReference type="GO" id="GO:0005737">
    <property type="term" value="C:cytoplasm"/>
    <property type="evidence" value="ECO:0007669"/>
    <property type="project" value="TreeGrafter"/>
</dbReference>
<dbReference type="GO" id="GO:0004834">
    <property type="term" value="F:tryptophan synthase activity"/>
    <property type="evidence" value="ECO:0007669"/>
    <property type="project" value="UniProtKB-UniRule"/>
</dbReference>
<dbReference type="CDD" id="cd06446">
    <property type="entry name" value="Trp-synth_B"/>
    <property type="match status" value="1"/>
</dbReference>
<dbReference type="FunFam" id="3.40.50.1100:FF:000001">
    <property type="entry name" value="Tryptophan synthase beta chain"/>
    <property type="match status" value="1"/>
</dbReference>
<dbReference type="FunFam" id="3.40.50.1100:FF:000004">
    <property type="entry name" value="Tryptophan synthase beta chain"/>
    <property type="match status" value="1"/>
</dbReference>
<dbReference type="Gene3D" id="3.40.50.1100">
    <property type="match status" value="2"/>
</dbReference>
<dbReference type="HAMAP" id="MF_00133">
    <property type="entry name" value="Trp_synth_beta"/>
    <property type="match status" value="1"/>
</dbReference>
<dbReference type="InterPro" id="IPR006653">
    <property type="entry name" value="Trp_synth_b_CS"/>
</dbReference>
<dbReference type="InterPro" id="IPR006654">
    <property type="entry name" value="Trp_synth_beta"/>
</dbReference>
<dbReference type="InterPro" id="IPR023026">
    <property type="entry name" value="Trp_synth_beta/beta-like"/>
</dbReference>
<dbReference type="InterPro" id="IPR001926">
    <property type="entry name" value="TrpB-like_PALP"/>
</dbReference>
<dbReference type="InterPro" id="IPR036052">
    <property type="entry name" value="TrpB-like_PALP_sf"/>
</dbReference>
<dbReference type="NCBIfam" id="TIGR00263">
    <property type="entry name" value="trpB"/>
    <property type="match status" value="1"/>
</dbReference>
<dbReference type="PANTHER" id="PTHR48077:SF3">
    <property type="entry name" value="TRYPTOPHAN SYNTHASE"/>
    <property type="match status" value="1"/>
</dbReference>
<dbReference type="PANTHER" id="PTHR48077">
    <property type="entry name" value="TRYPTOPHAN SYNTHASE-RELATED"/>
    <property type="match status" value="1"/>
</dbReference>
<dbReference type="Pfam" id="PF00291">
    <property type="entry name" value="PALP"/>
    <property type="match status" value="1"/>
</dbReference>
<dbReference type="PIRSF" id="PIRSF001413">
    <property type="entry name" value="Trp_syn_beta"/>
    <property type="match status" value="1"/>
</dbReference>
<dbReference type="SUPFAM" id="SSF53686">
    <property type="entry name" value="Tryptophan synthase beta subunit-like PLP-dependent enzymes"/>
    <property type="match status" value="1"/>
</dbReference>
<dbReference type="PROSITE" id="PS00168">
    <property type="entry name" value="TRP_SYNTHASE_BETA"/>
    <property type="match status" value="1"/>
</dbReference>
<reference key="1">
    <citation type="journal article" date="2009" name="J. Bacteriol.">
        <title>Role of conjugative elements in the evolution of the multidrug-resistant pandemic clone Streptococcus pneumoniae Spain23F ST81.</title>
        <authorList>
            <person name="Croucher N.J."/>
            <person name="Walker D."/>
            <person name="Romero P."/>
            <person name="Lennard N."/>
            <person name="Paterson G.K."/>
            <person name="Bason N.C."/>
            <person name="Mitchell A.M."/>
            <person name="Quail M.A."/>
            <person name="Andrew P.W."/>
            <person name="Parkhill J."/>
            <person name="Bentley S.D."/>
            <person name="Mitchell T.J."/>
        </authorList>
    </citation>
    <scope>NUCLEOTIDE SEQUENCE [LARGE SCALE GENOMIC DNA]</scope>
    <source>
        <strain>ATCC 700669 / Spain 23F-1</strain>
    </source>
</reference>
<keyword id="KW-0028">Amino-acid biosynthesis</keyword>
<keyword id="KW-0057">Aromatic amino acid biosynthesis</keyword>
<keyword id="KW-0456">Lyase</keyword>
<keyword id="KW-0663">Pyridoxal phosphate</keyword>
<keyword id="KW-0822">Tryptophan biosynthesis</keyword>
<sequence>MAYQEPNKDGFYGKFGGRFVPETLMTAVLELEKAYRESQADPSFQEELNQLLRQYVGRETPLYYAKNLTQHIGGAKIYLKREDLNHTGAHKINNALGQVWLAKRMGKKKIIAETGAGQHGVATATAAALFNMECTIYMGEEDVKRQALNVFRMELLGAKVEAVTDGSRVLKDAVNAALRSWVANIDDTHYILGSALGPHPFPEIVRDFQSVIGREAKQQYRDMTGQNLPDALVACVGGGSNAIGLFHPFVEDESVAMYGTEAAGLGVDTEHHAATLTKGRPGVLHGSLMDVLQDAHGQILEAFSISAGLDYPGIGPEHSHYHDIKRASYVPVTDEEALEGFQLLSRVEGIIPALESSHAIAFAVKLAKELGPEKSMIVCLSGRGDKDVVQVKDRLEADAAKKGEAHA</sequence>
<name>TRPB_STRPJ</name>
<comment type="function">
    <text evidence="1">The beta subunit is responsible for the synthesis of L-tryptophan from indole and L-serine.</text>
</comment>
<comment type="catalytic activity">
    <reaction evidence="1">
        <text>(1S,2R)-1-C-(indol-3-yl)glycerol 3-phosphate + L-serine = D-glyceraldehyde 3-phosphate + L-tryptophan + H2O</text>
        <dbReference type="Rhea" id="RHEA:10532"/>
        <dbReference type="ChEBI" id="CHEBI:15377"/>
        <dbReference type="ChEBI" id="CHEBI:33384"/>
        <dbReference type="ChEBI" id="CHEBI:57912"/>
        <dbReference type="ChEBI" id="CHEBI:58866"/>
        <dbReference type="ChEBI" id="CHEBI:59776"/>
        <dbReference type="EC" id="4.2.1.20"/>
    </reaction>
</comment>
<comment type="cofactor">
    <cofactor evidence="1">
        <name>pyridoxal 5'-phosphate</name>
        <dbReference type="ChEBI" id="CHEBI:597326"/>
    </cofactor>
</comment>
<comment type="pathway">
    <text evidence="1">Amino-acid biosynthesis; L-tryptophan biosynthesis; L-tryptophan from chorismate: step 5/5.</text>
</comment>
<comment type="subunit">
    <text evidence="1">Tetramer of two alpha and two beta chains.</text>
</comment>
<comment type="similarity">
    <text evidence="1">Belongs to the TrpB family.</text>
</comment>
<organism>
    <name type="scientific">Streptococcus pneumoniae (strain ATCC 700669 / Spain 23F-1)</name>
    <dbReference type="NCBI Taxonomy" id="561276"/>
    <lineage>
        <taxon>Bacteria</taxon>
        <taxon>Bacillati</taxon>
        <taxon>Bacillota</taxon>
        <taxon>Bacilli</taxon>
        <taxon>Lactobacillales</taxon>
        <taxon>Streptococcaceae</taxon>
        <taxon>Streptococcus</taxon>
    </lineage>
</organism>
<protein>
    <recommendedName>
        <fullName evidence="1">Tryptophan synthase beta chain</fullName>
        <ecNumber evidence="1">4.2.1.20</ecNumber>
    </recommendedName>
</protein>